<organism>
    <name type="scientific">Campylobacter jejuni subsp. jejuni serotype O:6 (strain 81116 / NCTC 11828)</name>
    <dbReference type="NCBI Taxonomy" id="407148"/>
    <lineage>
        <taxon>Bacteria</taxon>
        <taxon>Pseudomonadati</taxon>
        <taxon>Campylobacterota</taxon>
        <taxon>Epsilonproteobacteria</taxon>
        <taxon>Campylobacterales</taxon>
        <taxon>Campylobacteraceae</taxon>
        <taxon>Campylobacter</taxon>
    </lineage>
</organism>
<accession>A8FMZ7</accession>
<keyword id="KW-0378">Hydrolase</keyword>
<keyword id="KW-0546">Nucleotide metabolism</keyword>
<keyword id="KW-0547">Nucleotide-binding</keyword>
<reference key="1">
    <citation type="journal article" date="2007" name="J. Bacteriol.">
        <title>The complete genome sequence of Campylobacter jejuni strain 81116 (NCTC11828).</title>
        <authorList>
            <person name="Pearson B.M."/>
            <person name="Gaskin D.J.H."/>
            <person name="Segers R.P.A.M."/>
            <person name="Wells J.M."/>
            <person name="Nuijten P.J.M."/>
            <person name="van Vliet A.H.M."/>
        </authorList>
    </citation>
    <scope>NUCLEOTIDE SEQUENCE [LARGE SCALE GENOMIC DNA]</scope>
    <source>
        <strain>81116 / NCTC 11828</strain>
    </source>
</reference>
<name>DCD_CAMJ8</name>
<evidence type="ECO:0000255" key="1">
    <source>
        <dbReference type="HAMAP-Rule" id="MF_00146"/>
    </source>
</evidence>
<feature type="chain" id="PRO_1000071476" description="dCTP deaminase">
    <location>
        <begin position="1"/>
        <end position="186"/>
    </location>
</feature>
<feature type="active site" description="Proton donor/acceptor" evidence="1">
    <location>
        <position position="133"/>
    </location>
</feature>
<feature type="binding site" evidence="1">
    <location>
        <begin position="107"/>
        <end position="112"/>
    </location>
    <ligand>
        <name>dCTP</name>
        <dbReference type="ChEBI" id="CHEBI:61481"/>
    </ligand>
</feature>
<feature type="binding site" evidence="1">
    <location>
        <position position="152"/>
    </location>
    <ligand>
        <name>dCTP</name>
        <dbReference type="ChEBI" id="CHEBI:61481"/>
    </ligand>
</feature>
<feature type="binding site" evidence="1">
    <location>
        <position position="166"/>
    </location>
    <ligand>
        <name>dCTP</name>
        <dbReference type="ChEBI" id="CHEBI:61481"/>
    </ligand>
</feature>
<feature type="binding site" evidence="1">
    <location>
        <position position="176"/>
    </location>
    <ligand>
        <name>dCTP</name>
        <dbReference type="ChEBI" id="CHEBI:61481"/>
    </ligand>
</feature>
<sequence>MGLKADNWIRKMALERKMIEPFCEANIGKGVVSYGLSSYGYDIRVGREFKIFTNVNSTVVDPKNFVEENVVDFEGDVCIVPANSFALARTIEYFKMPDDVLAICLGKSTYARCGIIVNVTPFEPGFEGHITIEISNTTPLPAKIYANEGIAQVLFLQGDEKCDTTYKDKKGKYQAQTGITLPRILK</sequence>
<comment type="function">
    <text evidence="1">Catalyzes the deamination of dCTP to dUTP.</text>
</comment>
<comment type="catalytic activity">
    <reaction evidence="1">
        <text>dCTP + H2O + H(+) = dUTP + NH4(+)</text>
        <dbReference type="Rhea" id="RHEA:22680"/>
        <dbReference type="ChEBI" id="CHEBI:15377"/>
        <dbReference type="ChEBI" id="CHEBI:15378"/>
        <dbReference type="ChEBI" id="CHEBI:28938"/>
        <dbReference type="ChEBI" id="CHEBI:61481"/>
        <dbReference type="ChEBI" id="CHEBI:61555"/>
        <dbReference type="EC" id="3.5.4.13"/>
    </reaction>
</comment>
<comment type="pathway">
    <text evidence="1">Pyrimidine metabolism; dUMP biosynthesis; dUMP from dCTP (dUTP route): step 1/2.</text>
</comment>
<comment type="subunit">
    <text evidence="1">Homotrimer.</text>
</comment>
<comment type="similarity">
    <text evidence="1">Belongs to the dCTP deaminase family.</text>
</comment>
<protein>
    <recommendedName>
        <fullName evidence="1">dCTP deaminase</fullName>
        <ecNumber evidence="1">3.5.4.13</ecNumber>
    </recommendedName>
    <alternativeName>
        <fullName evidence="1">Deoxycytidine triphosphate deaminase</fullName>
    </alternativeName>
</protein>
<gene>
    <name evidence="1" type="primary">dcd</name>
    <name type="ordered locus">C8J_1235</name>
</gene>
<dbReference type="EC" id="3.5.4.13" evidence="1"/>
<dbReference type="EMBL" id="CP000814">
    <property type="protein sequence ID" value="ABV52834.1"/>
    <property type="molecule type" value="Genomic_DNA"/>
</dbReference>
<dbReference type="RefSeq" id="WP_002856264.1">
    <property type="nucleotide sequence ID" value="NC_009839.1"/>
</dbReference>
<dbReference type="SMR" id="A8FMZ7"/>
<dbReference type="KEGG" id="cju:C8J_1235"/>
<dbReference type="HOGENOM" id="CLU_087476_4_0_7"/>
<dbReference type="UniPathway" id="UPA00610">
    <property type="reaction ID" value="UER00665"/>
</dbReference>
<dbReference type="GO" id="GO:0008829">
    <property type="term" value="F:dCTP deaminase activity"/>
    <property type="evidence" value="ECO:0007669"/>
    <property type="project" value="UniProtKB-UniRule"/>
</dbReference>
<dbReference type="GO" id="GO:0000166">
    <property type="term" value="F:nucleotide binding"/>
    <property type="evidence" value="ECO:0007669"/>
    <property type="project" value="UniProtKB-KW"/>
</dbReference>
<dbReference type="GO" id="GO:0006226">
    <property type="term" value="P:dUMP biosynthetic process"/>
    <property type="evidence" value="ECO:0007669"/>
    <property type="project" value="UniProtKB-UniPathway"/>
</dbReference>
<dbReference type="GO" id="GO:0006229">
    <property type="term" value="P:dUTP biosynthetic process"/>
    <property type="evidence" value="ECO:0007669"/>
    <property type="project" value="UniProtKB-UniRule"/>
</dbReference>
<dbReference type="GO" id="GO:0015949">
    <property type="term" value="P:nucleobase-containing small molecule interconversion"/>
    <property type="evidence" value="ECO:0007669"/>
    <property type="project" value="TreeGrafter"/>
</dbReference>
<dbReference type="CDD" id="cd07557">
    <property type="entry name" value="trimeric_dUTPase"/>
    <property type="match status" value="1"/>
</dbReference>
<dbReference type="FunFam" id="2.70.40.10:FF:000001">
    <property type="entry name" value="dCTP deaminase"/>
    <property type="match status" value="1"/>
</dbReference>
<dbReference type="Gene3D" id="2.70.40.10">
    <property type="match status" value="1"/>
</dbReference>
<dbReference type="HAMAP" id="MF_00146">
    <property type="entry name" value="dCTP_deaminase"/>
    <property type="match status" value="1"/>
</dbReference>
<dbReference type="InterPro" id="IPR011962">
    <property type="entry name" value="dCTP_deaminase"/>
</dbReference>
<dbReference type="InterPro" id="IPR036157">
    <property type="entry name" value="dUTPase-like_sf"/>
</dbReference>
<dbReference type="InterPro" id="IPR033704">
    <property type="entry name" value="dUTPase_trimeric"/>
</dbReference>
<dbReference type="NCBIfam" id="TIGR02274">
    <property type="entry name" value="dCTP_deam"/>
    <property type="match status" value="1"/>
</dbReference>
<dbReference type="PANTHER" id="PTHR42680">
    <property type="entry name" value="DCTP DEAMINASE"/>
    <property type="match status" value="1"/>
</dbReference>
<dbReference type="PANTHER" id="PTHR42680:SF3">
    <property type="entry name" value="DCTP DEAMINASE"/>
    <property type="match status" value="1"/>
</dbReference>
<dbReference type="Pfam" id="PF22769">
    <property type="entry name" value="DCD"/>
    <property type="match status" value="1"/>
</dbReference>
<dbReference type="SUPFAM" id="SSF51283">
    <property type="entry name" value="dUTPase-like"/>
    <property type="match status" value="1"/>
</dbReference>
<proteinExistence type="inferred from homology"/>